<gene>
    <name evidence="6" type="primary">scrA</name>
</gene>
<organism>
    <name type="scientific">Staphylococcus xylosus</name>
    <dbReference type="NCBI Taxonomy" id="1288"/>
    <lineage>
        <taxon>Bacteria</taxon>
        <taxon>Bacillati</taxon>
        <taxon>Bacillota</taxon>
        <taxon>Bacilli</taxon>
        <taxon>Bacillales</taxon>
        <taxon>Staphylococcaceae</taxon>
        <taxon>Staphylococcus</taxon>
    </lineage>
</organism>
<keyword id="KW-1003">Cell membrane</keyword>
<keyword id="KW-0418">Kinase</keyword>
<keyword id="KW-0472">Membrane</keyword>
<keyword id="KW-0598">Phosphotransferase system</keyword>
<keyword id="KW-0762">Sugar transport</keyword>
<keyword id="KW-0808">Transferase</keyword>
<keyword id="KW-0812">Transmembrane</keyword>
<keyword id="KW-1133">Transmembrane helix</keyword>
<keyword id="KW-0813">Transport</keyword>
<dbReference type="EC" id="2.7.1.211" evidence="1"/>
<dbReference type="EMBL" id="X69800">
    <property type="protein sequence ID" value="CAA49461.1"/>
    <property type="molecule type" value="Genomic_DNA"/>
</dbReference>
<dbReference type="PIR" id="S39978">
    <property type="entry name" value="S39978"/>
</dbReference>
<dbReference type="RefSeq" id="WP_042362143.1">
    <property type="nucleotide sequence ID" value="NZ_CABIVW010000014.1"/>
</dbReference>
<dbReference type="SMR" id="P51184"/>
<dbReference type="STRING" id="1288.AWC37_09295"/>
<dbReference type="GeneID" id="45496183"/>
<dbReference type="KEGG" id="sxl:SXYLSMQ121_0549"/>
<dbReference type="KEGG" id="sxo:SXYL_00555"/>
<dbReference type="eggNOG" id="COG1263">
    <property type="taxonomic scope" value="Bacteria"/>
</dbReference>
<dbReference type="eggNOG" id="COG1264">
    <property type="taxonomic scope" value="Bacteria"/>
</dbReference>
<dbReference type="BioCyc" id="MetaCyc:MONOMER-12607"/>
<dbReference type="BRENDA" id="2.7.1.211">
    <property type="organism ID" value="5886"/>
</dbReference>
<dbReference type="GO" id="GO:0005886">
    <property type="term" value="C:plasma membrane"/>
    <property type="evidence" value="ECO:0007669"/>
    <property type="project" value="UniProtKB-SubCell"/>
</dbReference>
<dbReference type="GO" id="GO:0016301">
    <property type="term" value="F:kinase activity"/>
    <property type="evidence" value="ECO:0007669"/>
    <property type="project" value="UniProtKB-KW"/>
</dbReference>
<dbReference type="GO" id="GO:0022878">
    <property type="term" value="F:protein-N(PI)-phosphohistidine-sucrose phosphotransferase system transporter activity"/>
    <property type="evidence" value="ECO:0007669"/>
    <property type="project" value="RHEA"/>
</dbReference>
<dbReference type="GO" id="GO:0090589">
    <property type="term" value="F:protein-phosphocysteine-trehalose phosphotransferase system transporter activity"/>
    <property type="evidence" value="ECO:0007669"/>
    <property type="project" value="TreeGrafter"/>
</dbReference>
<dbReference type="GO" id="GO:0009401">
    <property type="term" value="P:phosphoenolpyruvate-dependent sugar phosphotransferase system"/>
    <property type="evidence" value="ECO:0007669"/>
    <property type="project" value="UniProtKB-KW"/>
</dbReference>
<dbReference type="GO" id="GO:0015771">
    <property type="term" value="P:trehalose transport"/>
    <property type="evidence" value="ECO:0007669"/>
    <property type="project" value="TreeGrafter"/>
</dbReference>
<dbReference type="CDD" id="cd00212">
    <property type="entry name" value="PTS_IIB_glc"/>
    <property type="match status" value="1"/>
</dbReference>
<dbReference type="FunFam" id="3.30.1360.60:FF:000001">
    <property type="entry name" value="PTS system glucose-specific IIBC component PtsG"/>
    <property type="match status" value="1"/>
</dbReference>
<dbReference type="Gene3D" id="3.30.1360.60">
    <property type="entry name" value="Glucose permease domain IIB"/>
    <property type="match status" value="1"/>
</dbReference>
<dbReference type="InterPro" id="IPR036878">
    <property type="entry name" value="Glu_permease_IIB"/>
</dbReference>
<dbReference type="InterPro" id="IPR018113">
    <property type="entry name" value="PTrfase_EIIB_Cys"/>
</dbReference>
<dbReference type="InterPro" id="IPR003352">
    <property type="entry name" value="PTS_EIIC"/>
</dbReference>
<dbReference type="InterPro" id="IPR013013">
    <property type="entry name" value="PTS_EIIC_1"/>
</dbReference>
<dbReference type="InterPro" id="IPR001996">
    <property type="entry name" value="PTS_IIB_1"/>
</dbReference>
<dbReference type="InterPro" id="IPR010973">
    <property type="entry name" value="PTS_IIBC_sucr"/>
</dbReference>
<dbReference type="InterPro" id="IPR050558">
    <property type="entry name" value="PTS_Sugar-Specific_Components"/>
</dbReference>
<dbReference type="NCBIfam" id="TIGR00826">
    <property type="entry name" value="EIIB_glc"/>
    <property type="match status" value="1"/>
</dbReference>
<dbReference type="NCBIfam" id="TIGR01996">
    <property type="entry name" value="PTS-II-BC-sucr"/>
    <property type="match status" value="1"/>
</dbReference>
<dbReference type="PANTHER" id="PTHR30175">
    <property type="entry name" value="PHOSPHOTRANSFERASE SYSTEM TRANSPORT PROTEIN"/>
    <property type="match status" value="1"/>
</dbReference>
<dbReference type="PANTHER" id="PTHR30175:SF4">
    <property type="entry name" value="PTS SYSTEM TREHALOSE-SPECIFIC EIIBC COMPONENT"/>
    <property type="match status" value="1"/>
</dbReference>
<dbReference type="Pfam" id="PF00367">
    <property type="entry name" value="PTS_EIIB"/>
    <property type="match status" value="1"/>
</dbReference>
<dbReference type="Pfam" id="PF02378">
    <property type="entry name" value="PTS_EIIC"/>
    <property type="match status" value="1"/>
</dbReference>
<dbReference type="SUPFAM" id="SSF55604">
    <property type="entry name" value="Glucose permease domain IIB"/>
    <property type="match status" value="1"/>
</dbReference>
<dbReference type="PROSITE" id="PS51098">
    <property type="entry name" value="PTS_EIIB_TYPE_1"/>
    <property type="match status" value="1"/>
</dbReference>
<dbReference type="PROSITE" id="PS01035">
    <property type="entry name" value="PTS_EIIB_TYPE_1_CYS"/>
    <property type="match status" value="1"/>
</dbReference>
<dbReference type="PROSITE" id="PS51103">
    <property type="entry name" value="PTS_EIIC_TYPE_1"/>
    <property type="match status" value="1"/>
</dbReference>
<proteinExistence type="inferred from homology"/>
<evidence type="ECO:0000250" key="1">
    <source>
        <dbReference type="UniProtKB" id="P05306"/>
    </source>
</evidence>
<evidence type="ECO:0000255" key="2"/>
<evidence type="ECO:0000255" key="3">
    <source>
        <dbReference type="PROSITE-ProRule" id="PRU00421"/>
    </source>
</evidence>
<evidence type="ECO:0000255" key="4">
    <source>
        <dbReference type="PROSITE-ProRule" id="PRU00426"/>
    </source>
</evidence>
<evidence type="ECO:0000269" key="5">
    <source>
    </source>
</evidence>
<evidence type="ECO:0000303" key="6">
    <source>
    </source>
</evidence>
<evidence type="ECO:0000305" key="7"/>
<sequence>MNYKKSAENILQALGGEDNVEAMTHCATRLRLVLKDEGLVDEKALGDMDVVKGTFSTGGQYQVIIGSGTVNKVFSELEKITGKEASSVSEVKTQGTKNMNPFQRFVKMLSDIFVPIIPAIVAGGLLMGINNILTAPGIFYDNQSLIEVQNQFSGLAEMINIFANAPFTLLPILIGFSAAKRFGGNAYLGAALGMILVHPELMSAYDYPKALEAGKEIPHWNLFGLEINQVGYQGQVLPMLVATYILATIEKGLRKVIPTVLDNLLTPLLAILSTGFITFSFVGPLTRTLGYWLSDGLTWLYEFGGAIGGLIFGLLYAPIVITGMHHSFIAIETQLIADSSSTGGSFIFPIATMSNIAQGAAALAAFFIIKENKKLKGVASAAGVSALLGITEPAMFGVNLKLRYPFIGAIVGSGIGSAYIAFFKVKAIALGTAGIPGFISISGQNNGWLHYGIAMIIAFIVAFGVTYALSYRKKYRNIEA</sequence>
<protein>
    <recommendedName>
        <fullName evidence="1">PTS system sucrose-specific EIIBC component</fullName>
    </recommendedName>
    <alternativeName>
        <fullName>EIIBC-Scr</fullName>
        <shortName>EII-Scr</shortName>
    </alternativeName>
    <domain>
        <recommendedName>
            <fullName>Sucrose-specific phosphotransferase enzyme IIB component</fullName>
            <ecNumber evidence="1">2.7.1.211</ecNumber>
        </recommendedName>
        <alternativeName>
            <fullName>PTS system sucrose-specific EIIB component</fullName>
        </alternativeName>
    </domain>
    <domain>
        <recommendedName>
            <fullName>Sucrose permease IIC component</fullName>
        </recommendedName>
        <alternativeName>
            <fullName>PTS system sucrose-specific EIIC component</fullName>
        </alternativeName>
    </domain>
</protein>
<accession>P51184</accession>
<reference key="1">
    <citation type="journal article" date="1993" name="Mol. Gen. Genet.">
        <title>Cloning and characterization of the scrA gene encoding the sucrose-specific Enzyme II of the phosphotransferase system from Staphylococcus xylosus.</title>
        <authorList>
            <person name="Wagner E."/>
            <person name="Goetz F."/>
            <person name="Brueckner R."/>
        </authorList>
    </citation>
    <scope>NUCLEOTIDE SEQUENCE [GENOMIC DNA]</scope>
    <scope>FUNCTION</scope>
    <scope>DISRUPTION PHENOTYPE</scope>
    <source>
        <strain>DSM 20267 / Isolate C2A</strain>
    </source>
</reference>
<comment type="function">
    <text evidence="1 5">The phosphoenolpyruvate-dependent sugar phosphotransferase system (sugar PTS), a major carbohydrate active transport system, catalyzes the phosphorylation of incoming sugar substrates concomitantly with their translocation across the cell membrane (By similarity). This system is involved in sucrose transport (PubMed:8232209).</text>
</comment>
<comment type="catalytic activity">
    <reaction evidence="1">
        <text>N(pros)-phospho-L-histidyl-[protein](out) + sucrose = sucrose 6(G)-phosphate(in) + L-histidyl-[protein]</text>
        <dbReference type="Rhea" id="RHEA:49236"/>
        <dbReference type="Rhea" id="RHEA-COMP:9745"/>
        <dbReference type="Rhea" id="RHEA-COMP:9746"/>
        <dbReference type="ChEBI" id="CHEBI:17992"/>
        <dbReference type="ChEBI" id="CHEBI:29979"/>
        <dbReference type="ChEBI" id="CHEBI:64837"/>
        <dbReference type="ChEBI" id="CHEBI:91002"/>
        <dbReference type="EC" id="2.7.1.211"/>
    </reaction>
</comment>
<comment type="subcellular location">
    <subcellularLocation>
        <location evidence="7">Cell membrane</location>
        <topology evidence="2">Multi-pass membrane protein</topology>
    </subcellularLocation>
</comment>
<comment type="domain">
    <text evidence="3">The PTS EIIB type-1 domain is phosphorylated by phospho-EIIA on a cysteinyl residue. Then, it transfers the phosphoryl group to the sugar substrate concomitantly with the sugar uptake processed by the PTS EIIC type-1 domain.</text>
</comment>
<comment type="domain">
    <text evidence="4">The EIIC domain type-1 forms the PTS system translocation channel and contains the specific substrate-binding site.</text>
</comment>
<comment type="disruption phenotype">
    <text evidence="5">Mutant is deficient in sucrose transport.</text>
</comment>
<name>PTSBC_STAXY</name>
<feature type="chain" id="PRO_0000186671" description="PTS system sucrose-specific EIIBC component">
    <location>
        <begin position="1"/>
        <end position="480"/>
    </location>
</feature>
<feature type="transmembrane region" description="Helical" evidence="4">
    <location>
        <begin position="109"/>
        <end position="129"/>
    </location>
</feature>
<feature type="transmembrane region" description="Helical" evidence="4">
    <location>
        <begin position="158"/>
        <end position="178"/>
    </location>
</feature>
<feature type="transmembrane region" description="Helical" evidence="4">
    <location>
        <begin position="182"/>
        <end position="202"/>
    </location>
</feature>
<feature type="transmembrane region" description="Helical" evidence="4">
    <location>
        <begin position="264"/>
        <end position="284"/>
    </location>
</feature>
<feature type="transmembrane region" description="Helical" evidence="4">
    <location>
        <begin position="303"/>
        <end position="323"/>
    </location>
</feature>
<feature type="transmembrane region" description="Helical" evidence="4">
    <location>
        <begin position="349"/>
        <end position="369"/>
    </location>
</feature>
<feature type="transmembrane region" description="Helical" evidence="4">
    <location>
        <begin position="405"/>
        <end position="425"/>
    </location>
</feature>
<feature type="transmembrane region" description="Helical" evidence="4">
    <location>
        <begin position="449"/>
        <end position="469"/>
    </location>
</feature>
<feature type="domain" description="PTS EIIB type-1" evidence="3">
    <location>
        <begin position="4"/>
        <end position="87"/>
    </location>
</feature>
<feature type="domain" description="PTS EIIC type-1" evidence="4">
    <location>
        <begin position="120"/>
        <end position="480"/>
    </location>
</feature>
<feature type="active site" description="Phosphocysteine intermediate; for EIIB activity" evidence="3">
    <location>
        <position position="26"/>
    </location>
</feature>